<name>RL17_ECOL5</name>
<accession>Q0TCG7</accession>
<feature type="chain" id="PRO_0000267871" description="Large ribosomal subunit protein bL17">
    <location>
        <begin position="1"/>
        <end position="127"/>
    </location>
</feature>
<comment type="subunit">
    <text evidence="1">Part of the 50S ribosomal subunit. Contacts protein L32.</text>
</comment>
<comment type="similarity">
    <text evidence="1">Belongs to the bacterial ribosomal protein bL17 family.</text>
</comment>
<dbReference type="EMBL" id="CP000247">
    <property type="protein sequence ID" value="ABG71362.1"/>
    <property type="molecule type" value="Genomic_DNA"/>
</dbReference>
<dbReference type="RefSeq" id="WP_001216368.1">
    <property type="nucleotide sequence ID" value="NC_008253.1"/>
</dbReference>
<dbReference type="SMR" id="Q0TCG7"/>
<dbReference type="GeneID" id="97442834"/>
<dbReference type="KEGG" id="ecp:ECP_3382"/>
<dbReference type="HOGENOM" id="CLU_074407_2_0_6"/>
<dbReference type="Proteomes" id="UP000009182">
    <property type="component" value="Chromosome"/>
</dbReference>
<dbReference type="GO" id="GO:0022625">
    <property type="term" value="C:cytosolic large ribosomal subunit"/>
    <property type="evidence" value="ECO:0007669"/>
    <property type="project" value="TreeGrafter"/>
</dbReference>
<dbReference type="GO" id="GO:0003735">
    <property type="term" value="F:structural constituent of ribosome"/>
    <property type="evidence" value="ECO:0007669"/>
    <property type="project" value="InterPro"/>
</dbReference>
<dbReference type="GO" id="GO:0006412">
    <property type="term" value="P:translation"/>
    <property type="evidence" value="ECO:0007669"/>
    <property type="project" value="UniProtKB-UniRule"/>
</dbReference>
<dbReference type="FunFam" id="3.90.1030.10:FF:000001">
    <property type="entry name" value="50S ribosomal protein L17"/>
    <property type="match status" value="1"/>
</dbReference>
<dbReference type="Gene3D" id="3.90.1030.10">
    <property type="entry name" value="Ribosomal protein L17"/>
    <property type="match status" value="1"/>
</dbReference>
<dbReference type="HAMAP" id="MF_01368">
    <property type="entry name" value="Ribosomal_bL17"/>
    <property type="match status" value="1"/>
</dbReference>
<dbReference type="InterPro" id="IPR000456">
    <property type="entry name" value="Ribosomal_bL17"/>
</dbReference>
<dbReference type="InterPro" id="IPR047859">
    <property type="entry name" value="Ribosomal_bL17_CS"/>
</dbReference>
<dbReference type="InterPro" id="IPR036373">
    <property type="entry name" value="Ribosomal_bL17_sf"/>
</dbReference>
<dbReference type="NCBIfam" id="TIGR00059">
    <property type="entry name" value="L17"/>
    <property type="match status" value="1"/>
</dbReference>
<dbReference type="PANTHER" id="PTHR14413:SF16">
    <property type="entry name" value="LARGE RIBOSOMAL SUBUNIT PROTEIN BL17M"/>
    <property type="match status" value="1"/>
</dbReference>
<dbReference type="PANTHER" id="PTHR14413">
    <property type="entry name" value="RIBOSOMAL PROTEIN L17"/>
    <property type="match status" value="1"/>
</dbReference>
<dbReference type="Pfam" id="PF01196">
    <property type="entry name" value="Ribosomal_L17"/>
    <property type="match status" value="1"/>
</dbReference>
<dbReference type="SUPFAM" id="SSF64263">
    <property type="entry name" value="Prokaryotic ribosomal protein L17"/>
    <property type="match status" value="1"/>
</dbReference>
<dbReference type="PROSITE" id="PS01167">
    <property type="entry name" value="RIBOSOMAL_L17"/>
    <property type="match status" value="1"/>
</dbReference>
<organism>
    <name type="scientific">Escherichia coli O6:K15:H31 (strain 536 / UPEC)</name>
    <dbReference type="NCBI Taxonomy" id="362663"/>
    <lineage>
        <taxon>Bacteria</taxon>
        <taxon>Pseudomonadati</taxon>
        <taxon>Pseudomonadota</taxon>
        <taxon>Gammaproteobacteria</taxon>
        <taxon>Enterobacterales</taxon>
        <taxon>Enterobacteriaceae</taxon>
        <taxon>Escherichia</taxon>
    </lineage>
</organism>
<protein>
    <recommendedName>
        <fullName evidence="1">Large ribosomal subunit protein bL17</fullName>
    </recommendedName>
    <alternativeName>
        <fullName evidence="2">50S ribosomal protein L17</fullName>
    </alternativeName>
</protein>
<reference key="1">
    <citation type="journal article" date="2006" name="Mol. Microbiol.">
        <title>Role of pathogenicity island-associated integrases in the genome plasticity of uropathogenic Escherichia coli strain 536.</title>
        <authorList>
            <person name="Hochhut B."/>
            <person name="Wilde C."/>
            <person name="Balling G."/>
            <person name="Middendorf B."/>
            <person name="Dobrindt U."/>
            <person name="Brzuszkiewicz E."/>
            <person name="Gottschalk G."/>
            <person name="Carniel E."/>
            <person name="Hacker J."/>
        </authorList>
    </citation>
    <scope>NUCLEOTIDE SEQUENCE [LARGE SCALE GENOMIC DNA]</scope>
    <source>
        <strain>536 / UPEC</strain>
    </source>
</reference>
<sequence>MRHRKSGRQLNRNSSHRQAMFRNMAGSLVRHEIIKTTLPKAKELRRVVEPLITLAKTDSVANRRLAFARTRDNEIVAKLFNELGPRFASRAGGYTRILKCGFRAGDNAPMAYIELVDRSEKAEAAAE</sequence>
<gene>
    <name evidence="1" type="primary">rplQ</name>
    <name type="ordered locus">ECP_3382</name>
</gene>
<keyword id="KW-0687">Ribonucleoprotein</keyword>
<keyword id="KW-0689">Ribosomal protein</keyword>
<proteinExistence type="inferred from homology"/>
<evidence type="ECO:0000255" key="1">
    <source>
        <dbReference type="HAMAP-Rule" id="MF_01368"/>
    </source>
</evidence>
<evidence type="ECO:0000305" key="2"/>